<protein>
    <recommendedName>
        <fullName evidence="1">Protein translocase subunit SecA 1</fullName>
        <ecNumber evidence="1">7.4.2.8</ecNumber>
    </recommendedName>
</protein>
<gene>
    <name evidence="1" type="primary">secA1</name>
    <name type="ordered locus">SERP0420</name>
</gene>
<proteinExistence type="inferred from homology"/>
<evidence type="ECO:0000255" key="1">
    <source>
        <dbReference type="HAMAP-Rule" id="MF_01382"/>
    </source>
</evidence>
<evidence type="ECO:0000256" key="2">
    <source>
        <dbReference type="SAM" id="MobiDB-lite"/>
    </source>
</evidence>
<reference key="1">
    <citation type="journal article" date="2005" name="J. Bacteriol.">
        <title>Insights on evolution of virulence and resistance from the complete genome analysis of an early methicillin-resistant Staphylococcus aureus strain and a biofilm-producing methicillin-resistant Staphylococcus epidermidis strain.</title>
        <authorList>
            <person name="Gill S.R."/>
            <person name="Fouts D.E."/>
            <person name="Archer G.L."/>
            <person name="Mongodin E.F."/>
            <person name="DeBoy R.T."/>
            <person name="Ravel J."/>
            <person name="Paulsen I.T."/>
            <person name="Kolonay J.F."/>
            <person name="Brinkac L.M."/>
            <person name="Beanan M.J."/>
            <person name="Dodson R.J."/>
            <person name="Daugherty S.C."/>
            <person name="Madupu R."/>
            <person name="Angiuoli S.V."/>
            <person name="Durkin A.S."/>
            <person name="Haft D.H."/>
            <person name="Vamathevan J.J."/>
            <person name="Khouri H."/>
            <person name="Utterback T.R."/>
            <person name="Lee C."/>
            <person name="Dimitrov G."/>
            <person name="Jiang L."/>
            <person name="Qin H."/>
            <person name="Weidman J."/>
            <person name="Tran K."/>
            <person name="Kang K.H."/>
            <person name="Hance I.R."/>
            <person name="Nelson K.E."/>
            <person name="Fraser C.M."/>
        </authorList>
    </citation>
    <scope>NUCLEOTIDE SEQUENCE [LARGE SCALE GENOMIC DNA]</scope>
    <source>
        <strain>ATCC 35984 / DSM 28319 / BCRC 17069 / CCUG 31568 / BM 3577 / RP62A</strain>
    </source>
</reference>
<sequence length="844" mass="96060">MGFLSKIVDGNKKEIKRLGKLADKVLALEEDTAILTDEEIREKTKSFQKELAEIEDVKKQNDYLDKILPEAYALVREGSKRVFNMIPYKVQVMGGIAIHKGDIAEMRTGEGKTLTATMPTYLNALAGRGVHVITVNEYLSSSQSEEMAELYNYLGLTVGLNLNSKSTEEKREAYAQDITYSTNNELGFDYLRDNMVNYAEERVMRPLHFAIIDEVDSILIDEARTPLIISGEAEKSTSLYTQANVFAKMLKAEDDYNYDEKTKAVHLTEQGADKAERMFKVDNLYDVQNVEVISHINTALRAHVTLQRDVDYMVVDGEVLIVDQFTGRTMPGRRFSEGLHQAIEAKEGVAIQNESKTMASITFQNYFRMYNKLAGMTGTAKTEEEEFRNIYNMTVTQIPTNKPVQRKDNSDLIYISQKGKFDAVVEDVVEKHKKGQPVLLGTVAVETSEYISNLLKKRGVRHDVLNAKNHEREAEIVSNAGQKGAVTIATNMAGRGTDIKLGDGVEELGGLAVIGTERHESRRIDDQLRGRSGRQGDRGDSRFYLSLQDELMVRFGSERLQKMMNRLGMDDSTPIESKMVSRAVESAQKRVEGNNFDARKRILEYDEVLRKQREIIYNERNEIIDSEESSQVVNAMLRSTLQRAINHFINEEDDNPDYTPFINYVNDVFLQEGDLQDTEIKGKDSEDIFEIVWSKIEKAYAQQQETLGDQMSEFERMILLRSIDTHWTDHIDTMDQLRQGIHLRSYAQQNPLRDYQNEGHELFDIMMQNIEEDTCKYILKSVVQFEDDVEREKSKSFGEAKHVTAEDGKEKAKPQPIVKGDQVGRNDPCPCGSGKKYKNCHGKA</sequence>
<organism>
    <name type="scientific">Staphylococcus epidermidis (strain ATCC 35984 / DSM 28319 / BCRC 17069 / CCUG 31568 / BM 3577 / RP62A)</name>
    <dbReference type="NCBI Taxonomy" id="176279"/>
    <lineage>
        <taxon>Bacteria</taxon>
        <taxon>Bacillati</taxon>
        <taxon>Bacillota</taxon>
        <taxon>Bacilli</taxon>
        <taxon>Bacillales</taxon>
        <taxon>Staphylococcaceae</taxon>
        <taxon>Staphylococcus</taxon>
    </lineage>
</organism>
<comment type="function">
    <text evidence="1">Part of the Sec protein translocase complex. Interacts with the SecYEG preprotein conducting channel. Has a central role in coupling the hydrolysis of ATP to the transfer of proteins into and across the cell membrane, serving as an ATP-driven molecular motor driving the stepwise translocation of polypeptide chains across the membrane.</text>
</comment>
<comment type="catalytic activity">
    <reaction evidence="1">
        <text>ATP + H2O + cellular proteinSide 1 = ADP + phosphate + cellular proteinSide 2.</text>
        <dbReference type="EC" id="7.4.2.8"/>
    </reaction>
</comment>
<comment type="cofactor">
    <cofactor evidence="1">
        <name>Zn(2+)</name>
        <dbReference type="ChEBI" id="CHEBI:29105"/>
    </cofactor>
    <text evidence="1">May bind 1 zinc ion per subunit.</text>
</comment>
<comment type="subunit">
    <text evidence="1">Monomer and homodimer. Part of the essential Sec protein translocation apparatus which comprises SecA, SecYEG and auxiliary proteins SecDF. Other proteins may also be involved.</text>
</comment>
<comment type="subcellular location">
    <subcellularLocation>
        <location evidence="1">Cell membrane</location>
        <topology evidence="1">Peripheral membrane protein</topology>
        <orientation evidence="1">Cytoplasmic side</orientation>
    </subcellularLocation>
    <subcellularLocation>
        <location evidence="1">Cytoplasm</location>
    </subcellularLocation>
    <text evidence="1">Distribution is 50-50.</text>
</comment>
<comment type="similarity">
    <text evidence="1">Belongs to the SecA family.</text>
</comment>
<dbReference type="EC" id="7.4.2.8" evidence="1"/>
<dbReference type="EMBL" id="CP000029">
    <property type="protein sequence ID" value="AAW53826.1"/>
    <property type="molecule type" value="Genomic_DNA"/>
</dbReference>
<dbReference type="SMR" id="Q5HQX6"/>
<dbReference type="STRING" id="176279.SERP0420"/>
<dbReference type="KEGG" id="ser:SERP0420"/>
<dbReference type="eggNOG" id="COG0653">
    <property type="taxonomic scope" value="Bacteria"/>
</dbReference>
<dbReference type="HOGENOM" id="CLU_005314_3_0_9"/>
<dbReference type="Proteomes" id="UP000000531">
    <property type="component" value="Chromosome"/>
</dbReference>
<dbReference type="GO" id="GO:0031522">
    <property type="term" value="C:cell envelope Sec protein transport complex"/>
    <property type="evidence" value="ECO:0007669"/>
    <property type="project" value="TreeGrafter"/>
</dbReference>
<dbReference type="GO" id="GO:0005829">
    <property type="term" value="C:cytosol"/>
    <property type="evidence" value="ECO:0007669"/>
    <property type="project" value="TreeGrafter"/>
</dbReference>
<dbReference type="GO" id="GO:0005886">
    <property type="term" value="C:plasma membrane"/>
    <property type="evidence" value="ECO:0007669"/>
    <property type="project" value="UniProtKB-SubCell"/>
</dbReference>
<dbReference type="GO" id="GO:0005524">
    <property type="term" value="F:ATP binding"/>
    <property type="evidence" value="ECO:0007669"/>
    <property type="project" value="UniProtKB-UniRule"/>
</dbReference>
<dbReference type="GO" id="GO:0046872">
    <property type="term" value="F:metal ion binding"/>
    <property type="evidence" value="ECO:0007669"/>
    <property type="project" value="UniProtKB-KW"/>
</dbReference>
<dbReference type="GO" id="GO:0008564">
    <property type="term" value="F:protein-exporting ATPase activity"/>
    <property type="evidence" value="ECO:0007669"/>
    <property type="project" value="UniProtKB-EC"/>
</dbReference>
<dbReference type="GO" id="GO:0065002">
    <property type="term" value="P:intracellular protein transmembrane transport"/>
    <property type="evidence" value="ECO:0007669"/>
    <property type="project" value="UniProtKB-UniRule"/>
</dbReference>
<dbReference type="GO" id="GO:0017038">
    <property type="term" value="P:protein import"/>
    <property type="evidence" value="ECO:0007669"/>
    <property type="project" value="InterPro"/>
</dbReference>
<dbReference type="GO" id="GO:0006605">
    <property type="term" value="P:protein targeting"/>
    <property type="evidence" value="ECO:0007669"/>
    <property type="project" value="UniProtKB-UniRule"/>
</dbReference>
<dbReference type="GO" id="GO:0043952">
    <property type="term" value="P:protein transport by the Sec complex"/>
    <property type="evidence" value="ECO:0007669"/>
    <property type="project" value="TreeGrafter"/>
</dbReference>
<dbReference type="CDD" id="cd17928">
    <property type="entry name" value="DEXDc_SecA"/>
    <property type="match status" value="1"/>
</dbReference>
<dbReference type="CDD" id="cd18803">
    <property type="entry name" value="SF2_C_secA"/>
    <property type="match status" value="1"/>
</dbReference>
<dbReference type="FunFam" id="3.40.50.300:FF:000694">
    <property type="entry name" value="Preprotein translocase subunit SecA"/>
    <property type="match status" value="1"/>
</dbReference>
<dbReference type="FunFam" id="3.90.1440.10:FF:000002">
    <property type="entry name" value="Protein translocase subunit SecA"/>
    <property type="match status" value="1"/>
</dbReference>
<dbReference type="Gene3D" id="1.10.3060.10">
    <property type="entry name" value="Helical scaffold and wing domains of SecA"/>
    <property type="match status" value="1"/>
</dbReference>
<dbReference type="Gene3D" id="3.40.50.300">
    <property type="entry name" value="P-loop containing nucleotide triphosphate hydrolases"/>
    <property type="match status" value="2"/>
</dbReference>
<dbReference type="Gene3D" id="3.90.1440.10">
    <property type="entry name" value="SecA, preprotein cross-linking domain"/>
    <property type="match status" value="1"/>
</dbReference>
<dbReference type="HAMAP" id="MF_01382">
    <property type="entry name" value="SecA"/>
    <property type="match status" value="1"/>
</dbReference>
<dbReference type="InterPro" id="IPR014001">
    <property type="entry name" value="Helicase_ATP-bd"/>
</dbReference>
<dbReference type="InterPro" id="IPR001650">
    <property type="entry name" value="Helicase_C-like"/>
</dbReference>
<dbReference type="InterPro" id="IPR027417">
    <property type="entry name" value="P-loop_NTPase"/>
</dbReference>
<dbReference type="InterPro" id="IPR004027">
    <property type="entry name" value="SEC_C_motif"/>
</dbReference>
<dbReference type="InterPro" id="IPR000185">
    <property type="entry name" value="SecA"/>
</dbReference>
<dbReference type="InterPro" id="IPR020937">
    <property type="entry name" value="SecA_CS"/>
</dbReference>
<dbReference type="InterPro" id="IPR011115">
    <property type="entry name" value="SecA_DEAD"/>
</dbReference>
<dbReference type="InterPro" id="IPR014018">
    <property type="entry name" value="SecA_motor_DEAD"/>
</dbReference>
<dbReference type="InterPro" id="IPR011130">
    <property type="entry name" value="SecA_preprotein_X-link_dom"/>
</dbReference>
<dbReference type="InterPro" id="IPR044722">
    <property type="entry name" value="SecA_SF2_C"/>
</dbReference>
<dbReference type="InterPro" id="IPR011116">
    <property type="entry name" value="SecA_Wing/Scaffold"/>
</dbReference>
<dbReference type="InterPro" id="IPR036266">
    <property type="entry name" value="SecA_Wing/Scaffold_sf"/>
</dbReference>
<dbReference type="InterPro" id="IPR036670">
    <property type="entry name" value="SecA_X-link_sf"/>
</dbReference>
<dbReference type="NCBIfam" id="NF006630">
    <property type="entry name" value="PRK09200.1"/>
    <property type="match status" value="1"/>
</dbReference>
<dbReference type="NCBIfam" id="TIGR00963">
    <property type="entry name" value="secA"/>
    <property type="match status" value="1"/>
</dbReference>
<dbReference type="PANTHER" id="PTHR30612:SF0">
    <property type="entry name" value="CHLOROPLAST PROTEIN-TRANSPORTING ATPASE"/>
    <property type="match status" value="1"/>
</dbReference>
<dbReference type="PANTHER" id="PTHR30612">
    <property type="entry name" value="SECA INNER MEMBRANE COMPONENT OF SEC PROTEIN SECRETION SYSTEM"/>
    <property type="match status" value="1"/>
</dbReference>
<dbReference type="Pfam" id="PF21090">
    <property type="entry name" value="P-loop_SecA"/>
    <property type="match status" value="1"/>
</dbReference>
<dbReference type="Pfam" id="PF02810">
    <property type="entry name" value="SEC-C"/>
    <property type="match status" value="1"/>
</dbReference>
<dbReference type="Pfam" id="PF07517">
    <property type="entry name" value="SecA_DEAD"/>
    <property type="match status" value="1"/>
</dbReference>
<dbReference type="Pfam" id="PF01043">
    <property type="entry name" value="SecA_PP_bind"/>
    <property type="match status" value="1"/>
</dbReference>
<dbReference type="Pfam" id="PF07516">
    <property type="entry name" value="SecA_SW"/>
    <property type="match status" value="1"/>
</dbReference>
<dbReference type="PRINTS" id="PR00906">
    <property type="entry name" value="SECA"/>
</dbReference>
<dbReference type="SMART" id="SM00957">
    <property type="entry name" value="SecA_DEAD"/>
    <property type="match status" value="1"/>
</dbReference>
<dbReference type="SMART" id="SM00958">
    <property type="entry name" value="SecA_PP_bind"/>
    <property type="match status" value="1"/>
</dbReference>
<dbReference type="SUPFAM" id="SSF81886">
    <property type="entry name" value="Helical scaffold and wing domains of SecA"/>
    <property type="match status" value="1"/>
</dbReference>
<dbReference type="SUPFAM" id="SSF52540">
    <property type="entry name" value="P-loop containing nucleoside triphosphate hydrolases"/>
    <property type="match status" value="2"/>
</dbReference>
<dbReference type="SUPFAM" id="SSF81767">
    <property type="entry name" value="Pre-protein crosslinking domain of SecA"/>
    <property type="match status" value="1"/>
</dbReference>
<dbReference type="PROSITE" id="PS01312">
    <property type="entry name" value="SECA"/>
    <property type="match status" value="1"/>
</dbReference>
<dbReference type="PROSITE" id="PS51196">
    <property type="entry name" value="SECA_MOTOR_DEAD"/>
    <property type="match status" value="1"/>
</dbReference>
<name>SECA1_STAEQ</name>
<feature type="chain" id="PRO_0000109611" description="Protein translocase subunit SecA 1">
    <location>
        <begin position="1"/>
        <end position="844"/>
    </location>
</feature>
<feature type="region of interest" description="Disordered" evidence="2">
    <location>
        <begin position="793"/>
        <end position="825"/>
    </location>
</feature>
<feature type="compositionally biased region" description="Basic and acidic residues" evidence="2">
    <location>
        <begin position="793"/>
        <end position="813"/>
    </location>
</feature>
<feature type="binding site" evidence="1">
    <location>
        <position position="91"/>
    </location>
    <ligand>
        <name>ATP</name>
        <dbReference type="ChEBI" id="CHEBI:30616"/>
    </ligand>
</feature>
<feature type="binding site" evidence="1">
    <location>
        <begin position="109"/>
        <end position="113"/>
    </location>
    <ligand>
        <name>ATP</name>
        <dbReference type="ChEBI" id="CHEBI:30616"/>
    </ligand>
</feature>
<feature type="binding site" evidence="1">
    <location>
        <position position="498"/>
    </location>
    <ligand>
        <name>ATP</name>
        <dbReference type="ChEBI" id="CHEBI:30616"/>
    </ligand>
</feature>
<feature type="binding site" evidence="1">
    <location>
        <position position="829"/>
    </location>
    <ligand>
        <name>Zn(2+)</name>
        <dbReference type="ChEBI" id="CHEBI:29105"/>
    </ligand>
</feature>
<feature type="binding site" evidence="1">
    <location>
        <position position="831"/>
    </location>
    <ligand>
        <name>Zn(2+)</name>
        <dbReference type="ChEBI" id="CHEBI:29105"/>
    </ligand>
</feature>
<feature type="binding site" evidence="1">
    <location>
        <position position="840"/>
    </location>
    <ligand>
        <name>Zn(2+)</name>
        <dbReference type="ChEBI" id="CHEBI:29105"/>
    </ligand>
</feature>
<feature type="binding site" evidence="1">
    <location>
        <position position="841"/>
    </location>
    <ligand>
        <name>Zn(2+)</name>
        <dbReference type="ChEBI" id="CHEBI:29105"/>
    </ligand>
</feature>
<keyword id="KW-0067">ATP-binding</keyword>
<keyword id="KW-1003">Cell membrane</keyword>
<keyword id="KW-0963">Cytoplasm</keyword>
<keyword id="KW-0472">Membrane</keyword>
<keyword id="KW-0479">Metal-binding</keyword>
<keyword id="KW-0547">Nucleotide-binding</keyword>
<keyword id="KW-0653">Protein transport</keyword>
<keyword id="KW-1185">Reference proteome</keyword>
<keyword id="KW-1278">Translocase</keyword>
<keyword id="KW-0811">Translocation</keyword>
<keyword id="KW-0813">Transport</keyword>
<keyword id="KW-0862">Zinc</keyword>
<accession>Q5HQX6</accession>